<evidence type="ECO:0000255" key="1"/>
<evidence type="ECO:0000255" key="2">
    <source>
        <dbReference type="PROSITE-ProRule" id="PRU00498"/>
    </source>
</evidence>
<evidence type="ECO:0000255" key="3">
    <source>
        <dbReference type="PROSITE-ProRule" id="PRU00798"/>
    </source>
</evidence>
<evidence type="ECO:0000269" key="4">
    <source>
    </source>
</evidence>
<evidence type="ECO:0000303" key="5">
    <source>
    </source>
</evidence>
<evidence type="ECO:0000305" key="6">
    <source>
    </source>
</evidence>
<proteinExistence type="evidence at protein level"/>
<protein>
    <recommendedName>
        <fullName evidence="5">Extracellular protease inhibitor 1</fullName>
    </recommendedName>
    <alternativeName>
        <fullName evidence="5">Secreted effector EPI1</fullName>
    </alternativeName>
</protein>
<dbReference type="EMBL" id="DS028119">
    <property type="protein sequence ID" value="EEY61125.1"/>
    <property type="molecule type" value="Genomic_DNA"/>
</dbReference>
<dbReference type="RefSeq" id="XP_002908042.1">
    <property type="nucleotide sequence ID" value="XM_002907996.1"/>
</dbReference>
<dbReference type="SMR" id="D0MVC9"/>
<dbReference type="STRING" id="403677.D0MVC9"/>
<dbReference type="MEROPS" id="I01.040"/>
<dbReference type="GlyCosmos" id="D0MVC9">
    <property type="glycosylation" value="1 site, No reported glycans"/>
</dbReference>
<dbReference type="EnsemblProtists" id="PITG_22681T0">
    <property type="protein sequence ID" value="PITG_22681T0"/>
    <property type="gene ID" value="PITG_22681"/>
</dbReference>
<dbReference type="GeneID" id="9468739"/>
<dbReference type="KEGG" id="pif:PITG_22681"/>
<dbReference type="VEuPathDB" id="FungiDB:PITG_22681"/>
<dbReference type="eggNOG" id="ENOG502RGGN">
    <property type="taxonomic scope" value="Eukaryota"/>
</dbReference>
<dbReference type="HOGENOM" id="CLU_143159_0_0_1"/>
<dbReference type="InParanoid" id="D0MVC9"/>
<dbReference type="OMA" id="RAKCHNE"/>
<dbReference type="OrthoDB" id="10029953at2759"/>
<dbReference type="Proteomes" id="UP000006643">
    <property type="component" value="Partially assembled WGS sequence"/>
</dbReference>
<dbReference type="GO" id="GO:0005576">
    <property type="term" value="C:extracellular region"/>
    <property type="evidence" value="ECO:0007669"/>
    <property type="project" value="UniProtKB-SubCell"/>
</dbReference>
<dbReference type="GO" id="GO:0140593">
    <property type="term" value="C:host apoplast"/>
    <property type="evidence" value="ECO:0000314"/>
    <property type="project" value="PHI-base"/>
</dbReference>
<dbReference type="GO" id="GO:0004867">
    <property type="term" value="F:serine-type endopeptidase inhibitor activity"/>
    <property type="evidence" value="ECO:0000314"/>
    <property type="project" value="PHI-base"/>
</dbReference>
<dbReference type="GO" id="GO:0140403">
    <property type="term" value="P:effector-mediated suppression of host innate immune response"/>
    <property type="evidence" value="ECO:0000314"/>
    <property type="project" value="PHI-base"/>
</dbReference>
<dbReference type="CDD" id="cd00104">
    <property type="entry name" value="KAZAL_FS"/>
    <property type="match status" value="2"/>
</dbReference>
<dbReference type="Gene3D" id="3.30.60.30">
    <property type="match status" value="2"/>
</dbReference>
<dbReference type="InterPro" id="IPR002350">
    <property type="entry name" value="Kazal_dom"/>
</dbReference>
<dbReference type="InterPro" id="IPR036058">
    <property type="entry name" value="Kazal_dom_sf"/>
</dbReference>
<dbReference type="InterPro" id="IPR050653">
    <property type="entry name" value="Prot_Inhib_GrowthFact_Antg"/>
</dbReference>
<dbReference type="PANTHER" id="PTHR10913:SF45">
    <property type="entry name" value="FOLLISTATIN, ISOFORM A-RELATED"/>
    <property type="match status" value="1"/>
</dbReference>
<dbReference type="PANTHER" id="PTHR10913">
    <property type="entry name" value="FOLLISTATIN-RELATED"/>
    <property type="match status" value="1"/>
</dbReference>
<dbReference type="Pfam" id="PF07648">
    <property type="entry name" value="Kazal_2"/>
    <property type="match status" value="2"/>
</dbReference>
<dbReference type="SMART" id="SM00280">
    <property type="entry name" value="KAZAL"/>
    <property type="match status" value="2"/>
</dbReference>
<dbReference type="SUPFAM" id="SSF100895">
    <property type="entry name" value="Kazal-type serine protease inhibitors"/>
    <property type="match status" value="2"/>
</dbReference>
<dbReference type="PROSITE" id="PS51465">
    <property type="entry name" value="KAZAL_2"/>
    <property type="match status" value="2"/>
</dbReference>
<gene>
    <name evidence="5" type="primary">EPI1</name>
    <name type="ORF">PITG_22681</name>
</gene>
<sequence>MKSALLFTLVVAAVHAQSPQVISPAPRRESNEIDCPEYCLDVYDPVGDGEGNTYSNECYMKRAKCHNETTPPAWKDLVLITGSSTGEQPPSKKCSTVCPDVELPVCGSNRVRYGNPCELRIAACEHPELNIVEDSGKACVGSKVTPQEG</sequence>
<name>EPI1_PHYIT</name>
<reference key="1">
    <citation type="journal article" date="2009" name="Nature">
        <title>Genome sequence and analysis of the Irish potato famine pathogen Phytophthora infestans.</title>
        <authorList>
            <consortium name="The Broad Institute Genome Sequencing Platform"/>
            <person name="Haas B.J."/>
            <person name="Kamoun S."/>
            <person name="Zody M.C."/>
            <person name="Jiang R.H."/>
            <person name="Handsaker R.E."/>
            <person name="Cano L.M."/>
            <person name="Grabherr M."/>
            <person name="Kodira C.D."/>
            <person name="Raffaele S."/>
            <person name="Torto-Alalibo T."/>
            <person name="Bozkurt T.O."/>
            <person name="Ah-Fong A.M."/>
            <person name="Alvarado L."/>
            <person name="Anderson V.L."/>
            <person name="Armstrong M.R."/>
            <person name="Avrova A."/>
            <person name="Baxter L."/>
            <person name="Beynon J."/>
            <person name="Boevink P.C."/>
            <person name="Bollmann S.R."/>
            <person name="Bos J.I."/>
            <person name="Bulone V."/>
            <person name="Cai G."/>
            <person name="Cakir C."/>
            <person name="Carrington J.C."/>
            <person name="Chawner M."/>
            <person name="Conti L."/>
            <person name="Costanzo S."/>
            <person name="Ewan R."/>
            <person name="Fahlgren N."/>
            <person name="Fischbach M.A."/>
            <person name="Fugelstad J."/>
            <person name="Gilroy E.M."/>
            <person name="Gnerre S."/>
            <person name="Green P.J."/>
            <person name="Grenville-Briggs L.J."/>
            <person name="Griffith J."/>
            <person name="Grunwald N.J."/>
            <person name="Horn K."/>
            <person name="Horner N.R."/>
            <person name="Hu C.H."/>
            <person name="Huitema E."/>
            <person name="Jeong D.H."/>
            <person name="Jones A.M."/>
            <person name="Jones J.D."/>
            <person name="Jones R.W."/>
            <person name="Karlsson E.K."/>
            <person name="Kunjeti S.G."/>
            <person name="Lamour K."/>
            <person name="Liu Z."/>
            <person name="Ma L."/>
            <person name="Maclean D."/>
            <person name="Chibucos M.C."/>
            <person name="McDonald H."/>
            <person name="McWalters J."/>
            <person name="Meijer H.J."/>
            <person name="Morgan W."/>
            <person name="Morris P.F."/>
            <person name="Munro C.A."/>
            <person name="O'Neill K."/>
            <person name="Ospina-Giraldo M."/>
            <person name="Pinzon A."/>
            <person name="Pritchard L."/>
            <person name="Ramsahoye B."/>
            <person name="Ren Q."/>
            <person name="Restrepo S."/>
            <person name="Roy S."/>
            <person name="Sadanandom A."/>
            <person name="Savidor A."/>
            <person name="Schornack S."/>
            <person name="Schwartz D.C."/>
            <person name="Schumann U.D."/>
            <person name="Schwessinger B."/>
            <person name="Seyer L."/>
            <person name="Sharpe T."/>
            <person name="Silvar C."/>
            <person name="Song J."/>
            <person name="Studholme D.J."/>
            <person name="Sykes S."/>
            <person name="Thines M."/>
            <person name="van de Vondervoort P.J."/>
            <person name="Phuntumart V."/>
            <person name="Wawra S."/>
            <person name="Weide R."/>
            <person name="Win J."/>
            <person name="Young C."/>
            <person name="Zhou S."/>
            <person name="Fry W."/>
            <person name="Meyers B.C."/>
            <person name="van West P."/>
            <person name="Ristaino J."/>
            <person name="Govers F."/>
            <person name="Birch P.R."/>
            <person name="Whisson S.C."/>
            <person name="Judelson H.S."/>
            <person name="Nusbaum C."/>
        </authorList>
    </citation>
    <scope>NUCLEOTIDE SEQUENCE [LARGE SCALE GENOMIC DNA]</scope>
    <source>
        <strain>T30-4</strain>
    </source>
</reference>
<reference key="2">
    <citation type="journal article" date="2004" name="J. Biol. Chem.">
        <title>A Kazal-like extracellular serine protease inhibitor from Phytophthora infestans targets the tomato pathogenesis-related protease P69B.</title>
        <authorList>
            <person name="Tian M."/>
            <person name="Huitema E."/>
            <person name="Da Cunha L."/>
            <person name="Torto-Alalibo T."/>
            <person name="Kamoun S."/>
        </authorList>
    </citation>
    <scope>FUNCTION</scope>
    <scope>SUBCELLULAR LOCATION</scope>
    <scope>INTERACTION WITH HOST P69B</scope>
    <scope>INDUCTION</scope>
</reference>
<accession>D0MVC9</accession>
<keyword id="KW-1015">Disulfide bond</keyword>
<keyword id="KW-0325">Glycoprotein</keyword>
<keyword id="KW-0646">Protease inhibitor</keyword>
<keyword id="KW-1185">Reference proteome</keyword>
<keyword id="KW-0677">Repeat</keyword>
<keyword id="KW-0964">Secreted</keyword>
<keyword id="KW-0722">Serine protease inhibitor</keyword>
<keyword id="KW-0732">Signal</keyword>
<keyword id="KW-0843">Virulence</keyword>
<organism>
    <name type="scientific">Phytophthora infestans (strain T30-4)</name>
    <name type="common">Potato late blight agent</name>
    <dbReference type="NCBI Taxonomy" id="403677"/>
    <lineage>
        <taxon>Eukaryota</taxon>
        <taxon>Sar</taxon>
        <taxon>Stramenopiles</taxon>
        <taxon>Oomycota</taxon>
        <taxon>Peronosporales</taxon>
        <taxon>Peronosporaceae</taxon>
        <taxon>Phytophthora</taxon>
    </lineage>
</organism>
<feature type="signal peptide" evidence="1">
    <location>
        <begin position="1"/>
        <end position="16"/>
    </location>
</feature>
<feature type="chain" id="PRO_5003012518" description="Extracellular protease inhibitor 1">
    <location>
        <begin position="17"/>
        <end position="149"/>
    </location>
</feature>
<feature type="domain" description="Kazal-like 1" evidence="3">
    <location>
        <begin position="29"/>
        <end position="86"/>
    </location>
</feature>
<feature type="domain" description="Kazal-like 2" evidence="3">
    <location>
        <begin position="88"/>
        <end position="141"/>
    </location>
</feature>
<feature type="site" description="Reactive bond" evidence="3">
    <location>
        <begin position="41"/>
        <end position="42"/>
    </location>
</feature>
<feature type="site" description="Reactive bond" evidence="3">
    <location>
        <begin position="100"/>
        <end position="101"/>
    </location>
</feature>
<feature type="glycosylation site" description="N-linked (GlcNAc...) asparagine" evidence="2">
    <location>
        <position position="67"/>
    </location>
</feature>
<feature type="disulfide bond" evidence="3">
    <location>
        <begin position="35"/>
        <end position="65"/>
    </location>
</feature>
<feature type="disulfide bond" evidence="3">
    <location>
        <begin position="39"/>
        <end position="58"/>
    </location>
</feature>
<feature type="disulfide bond" evidence="3">
    <location>
        <begin position="94"/>
        <end position="124"/>
    </location>
</feature>
<feature type="disulfide bond" evidence="3">
    <location>
        <begin position="98"/>
        <end position="117"/>
    </location>
</feature>
<feature type="disulfide bond" evidence="3">
    <location>
        <begin position="106"/>
        <end position="139"/>
    </location>
</feature>
<comment type="function">
    <text evidence="4">Secreted effector that interacts with and inhibits the pathogenesis-related P69B subtilisin-like serine protease of host tomato (PubMed:15096512). Inhibition of host proteases by a pathogen extracellular protease inhibitor forms a specific type of defense-counterdefense mechanism between plants and microbial pathogens (PubMed:15096512).</text>
</comment>
<comment type="subunit">
    <text evidence="4">Interacts with host subtilisin-like protease P69B.</text>
</comment>
<comment type="subcellular location">
    <subcellularLocation>
        <location evidence="6">Secreted</location>
    </subcellularLocation>
    <text evidence="4">Localizes to host apoplast where it targets defense proteases for inhibition.</text>
</comment>
<comment type="induction">
    <text evidence="4">Expressed during host infection with the highest mRNA levels 3 days post-inoculation (PubMed:15096512). EPI1 and its host target P69B are concurrently expressed during infection of tomato by P.infestans (PubMed:15096512).</text>
</comment>